<organism>
    <name type="scientific">Bradyrhizobium sp. (strain BTAi1 / ATCC BAA-1182)</name>
    <dbReference type="NCBI Taxonomy" id="288000"/>
    <lineage>
        <taxon>Bacteria</taxon>
        <taxon>Pseudomonadati</taxon>
        <taxon>Pseudomonadota</taxon>
        <taxon>Alphaproteobacteria</taxon>
        <taxon>Hyphomicrobiales</taxon>
        <taxon>Nitrobacteraceae</taxon>
        <taxon>Bradyrhizobium</taxon>
    </lineage>
</organism>
<sequence>MQVTETLSEGLKHEFQVSVPAADLDAKADAKLVDLKDKVRINGFRPGKVPVAHLKKIYGKSVMAETIDQTIRDTNTQIFTERGFRLATEPKVTMPTEEAEVEKILSGQSDLTYTVAVEVVPAITLADFKTFSVEKPVADITDADVDEAIKRLADANRSYAAKAEGAKAESGDRVKVNFKGTIDGVAFDGGTGEGIDVVIGSNTFIPGFEDQLIGIGVGETRTLKVAFPKNYLNNDLAGKDAEFETTATAIETPEEKVVDDEFAKTLGLESLDKLKQLMRDRLAGEFNQATRQRVKRALLDRLDETHKFDAPPSLIDEEFNLMWNSVKAEMDSSGKTFADENTTEEKAKEEYRTIADRRVRLGLVLSEIGEKNKITVTDDEVSRAVIERARSMPGREKEVWDFYRSNPQALAQLRAPIYEDKVVDFILELANVTEKKVSKDELFKDDENDKAA</sequence>
<comment type="function">
    <text evidence="1">Involved in protein export. Acts as a chaperone by maintaining the newly synthesized protein in an open conformation. Functions as a peptidyl-prolyl cis-trans isomerase.</text>
</comment>
<comment type="catalytic activity">
    <reaction evidence="1">
        <text>[protein]-peptidylproline (omega=180) = [protein]-peptidylproline (omega=0)</text>
        <dbReference type="Rhea" id="RHEA:16237"/>
        <dbReference type="Rhea" id="RHEA-COMP:10747"/>
        <dbReference type="Rhea" id="RHEA-COMP:10748"/>
        <dbReference type="ChEBI" id="CHEBI:83833"/>
        <dbReference type="ChEBI" id="CHEBI:83834"/>
        <dbReference type="EC" id="5.2.1.8"/>
    </reaction>
</comment>
<comment type="subcellular location">
    <subcellularLocation>
        <location>Cytoplasm</location>
    </subcellularLocation>
    <text evidence="1">About half TF is bound to the ribosome near the polypeptide exit tunnel while the other half is free in the cytoplasm.</text>
</comment>
<comment type="domain">
    <text evidence="1">Consists of 3 domains; the N-terminus binds the ribosome, the middle domain has PPIase activity, while the C-terminus has intrinsic chaperone activity on its own.</text>
</comment>
<comment type="similarity">
    <text evidence="1">Belongs to the FKBP-type PPIase family. Tig subfamily.</text>
</comment>
<dbReference type="EC" id="5.2.1.8" evidence="1"/>
<dbReference type="EMBL" id="CP000494">
    <property type="protein sequence ID" value="ABQ36604.1"/>
    <property type="molecule type" value="Genomic_DNA"/>
</dbReference>
<dbReference type="RefSeq" id="WP_012044598.1">
    <property type="nucleotide sequence ID" value="NC_009485.1"/>
</dbReference>
<dbReference type="SMR" id="A5EKB0"/>
<dbReference type="STRING" id="288000.BBta_4575"/>
<dbReference type="KEGG" id="bbt:BBta_4575"/>
<dbReference type="eggNOG" id="COG0544">
    <property type="taxonomic scope" value="Bacteria"/>
</dbReference>
<dbReference type="HOGENOM" id="CLU_033058_2_2_5"/>
<dbReference type="OrthoDB" id="9767721at2"/>
<dbReference type="Proteomes" id="UP000000246">
    <property type="component" value="Chromosome"/>
</dbReference>
<dbReference type="GO" id="GO:0005737">
    <property type="term" value="C:cytoplasm"/>
    <property type="evidence" value="ECO:0007669"/>
    <property type="project" value="UniProtKB-SubCell"/>
</dbReference>
<dbReference type="GO" id="GO:0003755">
    <property type="term" value="F:peptidyl-prolyl cis-trans isomerase activity"/>
    <property type="evidence" value="ECO:0007669"/>
    <property type="project" value="UniProtKB-UniRule"/>
</dbReference>
<dbReference type="GO" id="GO:0044183">
    <property type="term" value="F:protein folding chaperone"/>
    <property type="evidence" value="ECO:0007669"/>
    <property type="project" value="TreeGrafter"/>
</dbReference>
<dbReference type="GO" id="GO:0043022">
    <property type="term" value="F:ribosome binding"/>
    <property type="evidence" value="ECO:0007669"/>
    <property type="project" value="TreeGrafter"/>
</dbReference>
<dbReference type="GO" id="GO:0051083">
    <property type="term" value="P:'de novo' cotranslational protein folding"/>
    <property type="evidence" value="ECO:0007669"/>
    <property type="project" value="TreeGrafter"/>
</dbReference>
<dbReference type="GO" id="GO:0051301">
    <property type="term" value="P:cell division"/>
    <property type="evidence" value="ECO:0007669"/>
    <property type="project" value="UniProtKB-KW"/>
</dbReference>
<dbReference type="GO" id="GO:0061077">
    <property type="term" value="P:chaperone-mediated protein folding"/>
    <property type="evidence" value="ECO:0007669"/>
    <property type="project" value="TreeGrafter"/>
</dbReference>
<dbReference type="GO" id="GO:0015031">
    <property type="term" value="P:protein transport"/>
    <property type="evidence" value="ECO:0007669"/>
    <property type="project" value="UniProtKB-UniRule"/>
</dbReference>
<dbReference type="GO" id="GO:0043335">
    <property type="term" value="P:protein unfolding"/>
    <property type="evidence" value="ECO:0007669"/>
    <property type="project" value="TreeGrafter"/>
</dbReference>
<dbReference type="FunFam" id="3.10.50.40:FF:000001">
    <property type="entry name" value="Trigger factor"/>
    <property type="match status" value="1"/>
</dbReference>
<dbReference type="Gene3D" id="3.10.50.40">
    <property type="match status" value="1"/>
</dbReference>
<dbReference type="Gene3D" id="3.30.70.1050">
    <property type="entry name" value="Trigger factor ribosome-binding domain"/>
    <property type="match status" value="1"/>
</dbReference>
<dbReference type="Gene3D" id="1.10.3120.10">
    <property type="entry name" value="Trigger factor, C-terminal domain"/>
    <property type="match status" value="1"/>
</dbReference>
<dbReference type="HAMAP" id="MF_00303">
    <property type="entry name" value="Trigger_factor_Tig"/>
    <property type="match status" value="1"/>
</dbReference>
<dbReference type="InterPro" id="IPR046357">
    <property type="entry name" value="PPIase_dom_sf"/>
</dbReference>
<dbReference type="InterPro" id="IPR001179">
    <property type="entry name" value="PPIase_FKBP_dom"/>
</dbReference>
<dbReference type="InterPro" id="IPR005215">
    <property type="entry name" value="Trig_fac"/>
</dbReference>
<dbReference type="InterPro" id="IPR008880">
    <property type="entry name" value="Trigger_fac_C"/>
</dbReference>
<dbReference type="InterPro" id="IPR037041">
    <property type="entry name" value="Trigger_fac_C_sf"/>
</dbReference>
<dbReference type="InterPro" id="IPR008881">
    <property type="entry name" value="Trigger_fac_ribosome-bd_bac"/>
</dbReference>
<dbReference type="InterPro" id="IPR036611">
    <property type="entry name" value="Trigger_fac_ribosome-bd_sf"/>
</dbReference>
<dbReference type="InterPro" id="IPR027304">
    <property type="entry name" value="Trigger_fact/SurA_dom_sf"/>
</dbReference>
<dbReference type="NCBIfam" id="TIGR00115">
    <property type="entry name" value="tig"/>
    <property type="match status" value="1"/>
</dbReference>
<dbReference type="PANTHER" id="PTHR30560">
    <property type="entry name" value="TRIGGER FACTOR CHAPERONE AND PEPTIDYL-PROLYL CIS/TRANS ISOMERASE"/>
    <property type="match status" value="1"/>
</dbReference>
<dbReference type="PANTHER" id="PTHR30560:SF3">
    <property type="entry name" value="TRIGGER FACTOR-LIKE PROTEIN TIG, CHLOROPLASTIC"/>
    <property type="match status" value="1"/>
</dbReference>
<dbReference type="Pfam" id="PF00254">
    <property type="entry name" value="FKBP_C"/>
    <property type="match status" value="1"/>
</dbReference>
<dbReference type="Pfam" id="PF05698">
    <property type="entry name" value="Trigger_C"/>
    <property type="match status" value="1"/>
</dbReference>
<dbReference type="Pfam" id="PF05697">
    <property type="entry name" value="Trigger_N"/>
    <property type="match status" value="1"/>
</dbReference>
<dbReference type="PIRSF" id="PIRSF003095">
    <property type="entry name" value="Trigger_factor"/>
    <property type="match status" value="1"/>
</dbReference>
<dbReference type="SUPFAM" id="SSF54534">
    <property type="entry name" value="FKBP-like"/>
    <property type="match status" value="1"/>
</dbReference>
<dbReference type="SUPFAM" id="SSF109998">
    <property type="entry name" value="Triger factor/SurA peptide-binding domain-like"/>
    <property type="match status" value="1"/>
</dbReference>
<dbReference type="SUPFAM" id="SSF102735">
    <property type="entry name" value="Trigger factor ribosome-binding domain"/>
    <property type="match status" value="1"/>
</dbReference>
<dbReference type="PROSITE" id="PS50059">
    <property type="entry name" value="FKBP_PPIASE"/>
    <property type="match status" value="1"/>
</dbReference>
<evidence type="ECO:0000255" key="1">
    <source>
        <dbReference type="HAMAP-Rule" id="MF_00303"/>
    </source>
</evidence>
<keyword id="KW-0131">Cell cycle</keyword>
<keyword id="KW-0132">Cell division</keyword>
<keyword id="KW-0143">Chaperone</keyword>
<keyword id="KW-0963">Cytoplasm</keyword>
<keyword id="KW-0413">Isomerase</keyword>
<keyword id="KW-1185">Reference proteome</keyword>
<keyword id="KW-0697">Rotamase</keyword>
<accession>A5EKB0</accession>
<feature type="chain" id="PRO_1000022649" description="Trigger factor">
    <location>
        <begin position="1"/>
        <end position="452"/>
    </location>
</feature>
<feature type="domain" description="PPIase FKBP-type" evidence="1">
    <location>
        <begin position="171"/>
        <end position="256"/>
    </location>
</feature>
<protein>
    <recommendedName>
        <fullName evidence="1">Trigger factor</fullName>
        <shortName evidence="1">TF</shortName>
        <ecNumber evidence="1">5.2.1.8</ecNumber>
    </recommendedName>
    <alternativeName>
        <fullName evidence="1">PPIase</fullName>
    </alternativeName>
</protein>
<reference key="1">
    <citation type="journal article" date="2007" name="Science">
        <title>Legumes symbioses: absence of nod genes in photosynthetic bradyrhizobia.</title>
        <authorList>
            <person name="Giraud E."/>
            <person name="Moulin L."/>
            <person name="Vallenet D."/>
            <person name="Barbe V."/>
            <person name="Cytryn E."/>
            <person name="Avarre J.-C."/>
            <person name="Jaubert M."/>
            <person name="Simon D."/>
            <person name="Cartieaux F."/>
            <person name="Prin Y."/>
            <person name="Bena G."/>
            <person name="Hannibal L."/>
            <person name="Fardoux J."/>
            <person name="Kojadinovic M."/>
            <person name="Vuillet L."/>
            <person name="Lajus A."/>
            <person name="Cruveiller S."/>
            <person name="Rouy Z."/>
            <person name="Mangenot S."/>
            <person name="Segurens B."/>
            <person name="Dossat C."/>
            <person name="Franck W.L."/>
            <person name="Chang W.-S."/>
            <person name="Saunders E."/>
            <person name="Bruce D."/>
            <person name="Richardson P."/>
            <person name="Normand P."/>
            <person name="Dreyfus B."/>
            <person name="Pignol D."/>
            <person name="Stacey G."/>
            <person name="Emerich D."/>
            <person name="Vermeglio A."/>
            <person name="Medigue C."/>
            <person name="Sadowsky M."/>
        </authorList>
    </citation>
    <scope>NUCLEOTIDE SEQUENCE [LARGE SCALE GENOMIC DNA]</scope>
    <source>
        <strain>BTAi1 / ATCC BAA-1182</strain>
    </source>
</reference>
<gene>
    <name evidence="1" type="primary">tig</name>
    <name type="ordered locus">BBta_4575</name>
</gene>
<name>TIG_BRASB</name>
<proteinExistence type="inferred from homology"/>